<keyword id="KW-0240">DNA-directed RNA polymerase</keyword>
<keyword id="KW-0460">Magnesium</keyword>
<keyword id="KW-0479">Metal-binding</keyword>
<keyword id="KW-0548">Nucleotidyltransferase</keyword>
<keyword id="KW-0804">Transcription</keyword>
<keyword id="KW-0808">Transferase</keyword>
<keyword id="KW-0862">Zinc</keyword>
<gene>
    <name evidence="1" type="primary">rpoC</name>
    <name type="ordered locus">Mkms_0988</name>
</gene>
<dbReference type="EC" id="2.7.7.6" evidence="1"/>
<dbReference type="EMBL" id="CP000518">
    <property type="protein sequence ID" value="ABL90202.1"/>
    <property type="molecule type" value="Genomic_DNA"/>
</dbReference>
<dbReference type="SMR" id="A1UBJ4"/>
<dbReference type="STRING" id="189918.Mkms_0988"/>
<dbReference type="KEGG" id="mkm:Mkms_0988"/>
<dbReference type="HOGENOM" id="CLU_000524_3_1_11"/>
<dbReference type="OrthoDB" id="9815296at2"/>
<dbReference type="GO" id="GO:0000428">
    <property type="term" value="C:DNA-directed RNA polymerase complex"/>
    <property type="evidence" value="ECO:0007669"/>
    <property type="project" value="UniProtKB-KW"/>
</dbReference>
<dbReference type="GO" id="GO:0003677">
    <property type="term" value="F:DNA binding"/>
    <property type="evidence" value="ECO:0007669"/>
    <property type="project" value="UniProtKB-UniRule"/>
</dbReference>
<dbReference type="GO" id="GO:0003899">
    <property type="term" value="F:DNA-directed RNA polymerase activity"/>
    <property type="evidence" value="ECO:0007669"/>
    <property type="project" value="UniProtKB-UniRule"/>
</dbReference>
<dbReference type="GO" id="GO:0000287">
    <property type="term" value="F:magnesium ion binding"/>
    <property type="evidence" value="ECO:0007669"/>
    <property type="project" value="UniProtKB-UniRule"/>
</dbReference>
<dbReference type="GO" id="GO:0008270">
    <property type="term" value="F:zinc ion binding"/>
    <property type="evidence" value="ECO:0007669"/>
    <property type="project" value="UniProtKB-UniRule"/>
</dbReference>
<dbReference type="GO" id="GO:0006351">
    <property type="term" value="P:DNA-templated transcription"/>
    <property type="evidence" value="ECO:0007669"/>
    <property type="project" value="UniProtKB-UniRule"/>
</dbReference>
<dbReference type="CDD" id="cd02655">
    <property type="entry name" value="RNAP_beta'_C"/>
    <property type="match status" value="1"/>
</dbReference>
<dbReference type="CDD" id="cd01609">
    <property type="entry name" value="RNAP_beta'_N"/>
    <property type="match status" value="1"/>
</dbReference>
<dbReference type="FunFam" id="1.10.150.390:FF:000002">
    <property type="entry name" value="DNA-directed RNA polymerase subunit beta"/>
    <property type="match status" value="1"/>
</dbReference>
<dbReference type="FunFam" id="1.10.40.90:FF:000001">
    <property type="entry name" value="DNA-directed RNA polymerase subunit beta"/>
    <property type="match status" value="1"/>
</dbReference>
<dbReference type="FunFam" id="4.10.860.120:FF:000001">
    <property type="entry name" value="DNA-directed RNA polymerase subunit beta"/>
    <property type="match status" value="1"/>
</dbReference>
<dbReference type="Gene3D" id="1.10.132.30">
    <property type="match status" value="1"/>
</dbReference>
<dbReference type="Gene3D" id="1.10.150.390">
    <property type="match status" value="1"/>
</dbReference>
<dbReference type="Gene3D" id="1.10.1790.20">
    <property type="match status" value="1"/>
</dbReference>
<dbReference type="Gene3D" id="1.10.40.90">
    <property type="match status" value="1"/>
</dbReference>
<dbReference type="Gene3D" id="2.40.40.20">
    <property type="match status" value="1"/>
</dbReference>
<dbReference type="Gene3D" id="2.40.50.100">
    <property type="match status" value="1"/>
</dbReference>
<dbReference type="Gene3D" id="4.10.860.120">
    <property type="entry name" value="RNA polymerase II, clamp domain"/>
    <property type="match status" value="1"/>
</dbReference>
<dbReference type="Gene3D" id="1.10.274.100">
    <property type="entry name" value="RNA polymerase Rpb1, domain 3"/>
    <property type="match status" value="1"/>
</dbReference>
<dbReference type="HAMAP" id="MF_01322">
    <property type="entry name" value="RNApol_bact_RpoC"/>
    <property type="match status" value="1"/>
</dbReference>
<dbReference type="InterPro" id="IPR045867">
    <property type="entry name" value="DNA-dir_RpoC_beta_prime"/>
</dbReference>
<dbReference type="InterPro" id="IPR012754">
    <property type="entry name" value="DNA-dir_RpoC_beta_prime_bact"/>
</dbReference>
<dbReference type="InterPro" id="IPR000722">
    <property type="entry name" value="RNA_pol_asu"/>
</dbReference>
<dbReference type="InterPro" id="IPR006592">
    <property type="entry name" value="RNA_pol_N"/>
</dbReference>
<dbReference type="InterPro" id="IPR007080">
    <property type="entry name" value="RNA_pol_Rpb1_1"/>
</dbReference>
<dbReference type="InterPro" id="IPR007066">
    <property type="entry name" value="RNA_pol_Rpb1_3"/>
</dbReference>
<dbReference type="InterPro" id="IPR042102">
    <property type="entry name" value="RNA_pol_Rpb1_3_sf"/>
</dbReference>
<dbReference type="InterPro" id="IPR007083">
    <property type="entry name" value="RNA_pol_Rpb1_4"/>
</dbReference>
<dbReference type="InterPro" id="IPR007081">
    <property type="entry name" value="RNA_pol_Rpb1_5"/>
</dbReference>
<dbReference type="InterPro" id="IPR044893">
    <property type="entry name" value="RNA_pol_Rpb1_clamp_domain"/>
</dbReference>
<dbReference type="InterPro" id="IPR038120">
    <property type="entry name" value="Rpb1_funnel_sf"/>
</dbReference>
<dbReference type="NCBIfam" id="NF011498">
    <property type="entry name" value="PRK14906.1"/>
    <property type="match status" value="1"/>
</dbReference>
<dbReference type="NCBIfam" id="TIGR02386">
    <property type="entry name" value="rpoC_TIGR"/>
    <property type="match status" value="1"/>
</dbReference>
<dbReference type="PANTHER" id="PTHR19376">
    <property type="entry name" value="DNA-DIRECTED RNA POLYMERASE"/>
    <property type="match status" value="1"/>
</dbReference>
<dbReference type="PANTHER" id="PTHR19376:SF54">
    <property type="entry name" value="DNA-DIRECTED RNA POLYMERASE SUBUNIT BETA"/>
    <property type="match status" value="1"/>
</dbReference>
<dbReference type="Pfam" id="PF04997">
    <property type="entry name" value="RNA_pol_Rpb1_1"/>
    <property type="match status" value="1"/>
</dbReference>
<dbReference type="Pfam" id="PF00623">
    <property type="entry name" value="RNA_pol_Rpb1_2"/>
    <property type="match status" value="1"/>
</dbReference>
<dbReference type="Pfam" id="PF04983">
    <property type="entry name" value="RNA_pol_Rpb1_3"/>
    <property type="match status" value="1"/>
</dbReference>
<dbReference type="Pfam" id="PF05000">
    <property type="entry name" value="RNA_pol_Rpb1_4"/>
    <property type="match status" value="1"/>
</dbReference>
<dbReference type="Pfam" id="PF04998">
    <property type="entry name" value="RNA_pol_Rpb1_5"/>
    <property type="match status" value="1"/>
</dbReference>
<dbReference type="SMART" id="SM00663">
    <property type="entry name" value="RPOLA_N"/>
    <property type="match status" value="1"/>
</dbReference>
<dbReference type="SUPFAM" id="SSF64484">
    <property type="entry name" value="beta and beta-prime subunits of DNA dependent RNA-polymerase"/>
    <property type="match status" value="1"/>
</dbReference>
<evidence type="ECO:0000255" key="1">
    <source>
        <dbReference type="HAMAP-Rule" id="MF_01322"/>
    </source>
</evidence>
<name>RPOC_MYCSK</name>
<accession>A1UBJ4</accession>
<organism>
    <name type="scientific">Mycobacterium sp. (strain KMS)</name>
    <dbReference type="NCBI Taxonomy" id="189918"/>
    <lineage>
        <taxon>Bacteria</taxon>
        <taxon>Bacillati</taxon>
        <taxon>Actinomycetota</taxon>
        <taxon>Actinomycetes</taxon>
        <taxon>Mycobacteriales</taxon>
        <taxon>Mycobacteriaceae</taxon>
        <taxon>Mycobacterium</taxon>
    </lineage>
</organism>
<comment type="function">
    <text evidence="1">DNA-dependent RNA polymerase catalyzes the transcription of DNA into RNA using the four ribonucleoside triphosphates as substrates.</text>
</comment>
<comment type="catalytic activity">
    <reaction evidence="1">
        <text>RNA(n) + a ribonucleoside 5'-triphosphate = RNA(n+1) + diphosphate</text>
        <dbReference type="Rhea" id="RHEA:21248"/>
        <dbReference type="Rhea" id="RHEA-COMP:14527"/>
        <dbReference type="Rhea" id="RHEA-COMP:17342"/>
        <dbReference type="ChEBI" id="CHEBI:33019"/>
        <dbReference type="ChEBI" id="CHEBI:61557"/>
        <dbReference type="ChEBI" id="CHEBI:140395"/>
        <dbReference type="EC" id="2.7.7.6"/>
    </reaction>
</comment>
<comment type="cofactor">
    <cofactor evidence="1">
        <name>Mg(2+)</name>
        <dbReference type="ChEBI" id="CHEBI:18420"/>
    </cofactor>
    <text evidence="1">Binds 1 Mg(2+) ion per subunit.</text>
</comment>
<comment type="cofactor">
    <cofactor evidence="1">
        <name>Zn(2+)</name>
        <dbReference type="ChEBI" id="CHEBI:29105"/>
    </cofactor>
    <text evidence="1">Binds 2 Zn(2+) ions per subunit.</text>
</comment>
<comment type="subunit">
    <text evidence="1">The RNAP catalytic core consists of 2 alpha, 1 beta, 1 beta' and 1 omega subunit. When a sigma factor is associated with the core the holoenzyme is formed, which can initiate transcription.</text>
</comment>
<comment type="similarity">
    <text evidence="1">Belongs to the RNA polymerase beta' chain family.</text>
</comment>
<feature type="chain" id="PRO_0000308857" description="DNA-directed RNA polymerase subunit beta'">
    <location>
        <begin position="1"/>
        <end position="1315"/>
    </location>
</feature>
<feature type="binding site" evidence="1">
    <location>
        <position position="60"/>
    </location>
    <ligand>
        <name>Zn(2+)</name>
        <dbReference type="ChEBI" id="CHEBI:29105"/>
        <label>1</label>
    </ligand>
</feature>
<feature type="binding site" evidence="1">
    <location>
        <position position="62"/>
    </location>
    <ligand>
        <name>Zn(2+)</name>
        <dbReference type="ChEBI" id="CHEBI:29105"/>
        <label>1</label>
    </ligand>
</feature>
<feature type="binding site" evidence="1">
    <location>
        <position position="75"/>
    </location>
    <ligand>
        <name>Zn(2+)</name>
        <dbReference type="ChEBI" id="CHEBI:29105"/>
        <label>1</label>
    </ligand>
</feature>
<feature type="binding site" evidence="1">
    <location>
        <position position="78"/>
    </location>
    <ligand>
        <name>Zn(2+)</name>
        <dbReference type="ChEBI" id="CHEBI:29105"/>
        <label>1</label>
    </ligand>
</feature>
<feature type="binding site" evidence="1">
    <location>
        <position position="535"/>
    </location>
    <ligand>
        <name>Mg(2+)</name>
        <dbReference type="ChEBI" id="CHEBI:18420"/>
    </ligand>
</feature>
<feature type="binding site" evidence="1">
    <location>
        <position position="537"/>
    </location>
    <ligand>
        <name>Mg(2+)</name>
        <dbReference type="ChEBI" id="CHEBI:18420"/>
    </ligand>
</feature>
<feature type="binding site" evidence="1">
    <location>
        <position position="539"/>
    </location>
    <ligand>
        <name>Mg(2+)</name>
        <dbReference type="ChEBI" id="CHEBI:18420"/>
    </ligand>
</feature>
<feature type="binding site" evidence="1">
    <location>
        <position position="890"/>
    </location>
    <ligand>
        <name>Zn(2+)</name>
        <dbReference type="ChEBI" id="CHEBI:29105"/>
        <label>2</label>
    </ligand>
</feature>
<feature type="binding site" evidence="1">
    <location>
        <position position="967"/>
    </location>
    <ligand>
        <name>Zn(2+)</name>
        <dbReference type="ChEBI" id="CHEBI:29105"/>
        <label>2</label>
    </ligand>
</feature>
<feature type="binding site" evidence="1">
    <location>
        <position position="974"/>
    </location>
    <ligand>
        <name>Zn(2+)</name>
        <dbReference type="ChEBI" id="CHEBI:29105"/>
        <label>2</label>
    </ligand>
</feature>
<feature type="binding site" evidence="1">
    <location>
        <position position="977"/>
    </location>
    <ligand>
        <name>Zn(2+)</name>
        <dbReference type="ChEBI" id="CHEBI:29105"/>
        <label>2</label>
    </ligand>
</feature>
<sequence length="1315" mass="146871">MLDVNFFDELRIGLATADDIRQWSYGEVKKPETINYRTLKPEKDGLFCEKIFGPTRDWECYCGKYKRVRFKGIICERCGVEVTRAKVRRERMGHIELAAPVTHIWYFKGVPSRLGYLLDLAPKDLEKIIYFAAYVITDVNDEMRHNELSTLEAEMVVEKKAVEDQRDADLEARAQKLEADLAELEAEGAKSDVRRKVRDGGEREMRQLRDRAQRELDRLDEIWTTFTKLAPKQLIVDEVLYRELVDRYGEYFTGAMGAESIKKLIENFDIEAEAENLRETIRSGKGQKKLRALKRLKVVAAFQTNRNSPMGMVLDAVPVIPPELRPMVQLDGGRFATSDLNDLYRRVINRNNRLKRLIDLGAPEIIVNNEKRMLQESVDALFDNGRRGRPVTGPGNRPLKSLSDLLKGKQGRFRQNLLGKRVDYSGRSVIVVGPQLKLHQCGLPKLMALELFKPFVMKRLVDLNHAQNIKSAKRMVERQRPQVWDVLEEVIAEHPVLLNRAPTLHRLGIQAFEPQLVEGKAIQLHPLVCEAFNADFDGDQMAVHLPLSAEAQAEARILMLSSNNILSPASGKPLAMPRLDMVTGLYFLTTMIEGDKGEYRPAATDQPEEGVYSSPAEAIMAMDRGALSVRAKIKVRLTQLRPPAALEAELFENGWKPGLAWTAETTLGRVMFNELLPISYPFINEQMHKKVQARIINDLAERFPMIVVAQTVDKLKDAGFHWATRSGVTVSMADVLVPPQKQEILDRYEAEADGIERKYQRGALNHKERNDSLVKIWQDATEEVGKALEEHYPADNPIITIVKSGATGNFTQTRTLAGMKGLVTNPKGEFIPRPIKSSFREGLTVLEYFINTHGARKGLADTALRTADSGYLTRRLVDVSQDVIVREHDCETERGINVTLAERQPDGSLIRDPHVETSAFARTLATDAVDADGNVVIERGHDLGDPAIDKLLAAGIDHVKVRSVLTCASATGVCAMCYGRSMATGKLVDIGEAVGIVAAQSIGEPGTQLTMRTFHQGGVGEDITGGLPRVQELFEARVPRNKAPIADVSGRVQLEEGERFYKITIVPDDGGEEVVYDKLSKRQRLRVIKHEDGSEGVLSDGDHVEVGDQLMEGSADPHEVLRVQGPREVQIHLVHEVQEVYRAQGVSIHDKHIEVIVRQMLRRVTIIDSGATEFLPGSLTERAEFESENRRVVAEGGEPAAGRPVLMGITKASLATDSWLSAASFQETTRVLTDAAINCRSDKLQGLKENVIIGKLIPAGTGINRYRNIQVQPTEEARAAAYTIPSYEDQYYSPDFGQATGAAVPLDDYGYSDYR</sequence>
<proteinExistence type="inferred from homology"/>
<protein>
    <recommendedName>
        <fullName evidence="1">DNA-directed RNA polymerase subunit beta'</fullName>
        <shortName evidence="1">RNAP subunit beta'</shortName>
        <ecNumber evidence="1">2.7.7.6</ecNumber>
    </recommendedName>
    <alternativeName>
        <fullName evidence="1">RNA polymerase subunit beta'</fullName>
    </alternativeName>
    <alternativeName>
        <fullName evidence="1">Transcriptase subunit beta'</fullName>
    </alternativeName>
</protein>
<reference key="1">
    <citation type="submission" date="2006-12" db="EMBL/GenBank/DDBJ databases">
        <title>Complete sequence of chromosome of Mycobacterium sp. KMS.</title>
        <authorList>
            <consortium name="US DOE Joint Genome Institute"/>
            <person name="Copeland A."/>
            <person name="Lucas S."/>
            <person name="Lapidus A."/>
            <person name="Barry K."/>
            <person name="Detter J.C."/>
            <person name="Glavina del Rio T."/>
            <person name="Hammon N."/>
            <person name="Israni S."/>
            <person name="Dalin E."/>
            <person name="Tice H."/>
            <person name="Pitluck S."/>
            <person name="Kiss H."/>
            <person name="Brettin T."/>
            <person name="Bruce D."/>
            <person name="Han C."/>
            <person name="Tapia R."/>
            <person name="Gilna P."/>
            <person name="Schmutz J."/>
            <person name="Larimer F."/>
            <person name="Land M."/>
            <person name="Hauser L."/>
            <person name="Kyrpides N."/>
            <person name="Mikhailova N."/>
            <person name="Miller C.D."/>
            <person name="Richardson P."/>
        </authorList>
    </citation>
    <scope>NUCLEOTIDE SEQUENCE [LARGE SCALE GENOMIC DNA]</scope>
    <source>
        <strain>KMS</strain>
    </source>
</reference>